<gene>
    <name type="primary">csn2</name>
    <name type="ORF">SPAPB17E12.04c</name>
</gene>
<feature type="chain" id="PRO_0000120977" description="COP9 signalosome complex subunit 2">
    <location>
        <begin position="1"/>
        <end position="437"/>
    </location>
</feature>
<feature type="domain" description="PCI" evidence="2">
    <location>
        <begin position="249"/>
        <end position="418"/>
    </location>
</feature>
<keyword id="KW-0963">Cytoplasm</keyword>
<keyword id="KW-0539">Nucleus</keyword>
<keyword id="KW-1185">Reference proteome</keyword>
<keyword id="KW-0736">Signalosome</keyword>
<reference key="1">
    <citation type="journal article" date="2002" name="Mol. Biol. Cell">
        <title>Deletion mutants in COP9/signalosome subunits in fission yeast Schizosaccharomyces pombe display distinct phenotypes.</title>
        <authorList>
            <person name="Mundt K.E."/>
            <person name="Liu C."/>
            <person name="Carr A.M."/>
        </authorList>
    </citation>
    <scope>NUCLEOTIDE SEQUENCE [GENOMIC DNA]</scope>
    <scope>SUBUNIT</scope>
    <scope>SUBCELLULAR LOCATION</scope>
</reference>
<reference key="2">
    <citation type="journal article" date="2002" name="Nature">
        <title>The genome sequence of Schizosaccharomyces pombe.</title>
        <authorList>
            <person name="Wood V."/>
            <person name="Gwilliam R."/>
            <person name="Rajandream M.A."/>
            <person name="Lyne M.H."/>
            <person name="Lyne R."/>
            <person name="Stewart A."/>
            <person name="Sgouros J.G."/>
            <person name="Peat N."/>
            <person name="Hayles J."/>
            <person name="Baker S.G."/>
            <person name="Basham D."/>
            <person name="Bowman S."/>
            <person name="Brooks K."/>
            <person name="Brown D."/>
            <person name="Brown S."/>
            <person name="Chillingworth T."/>
            <person name="Churcher C.M."/>
            <person name="Collins M."/>
            <person name="Connor R."/>
            <person name="Cronin A."/>
            <person name="Davis P."/>
            <person name="Feltwell T."/>
            <person name="Fraser A."/>
            <person name="Gentles S."/>
            <person name="Goble A."/>
            <person name="Hamlin N."/>
            <person name="Harris D.E."/>
            <person name="Hidalgo J."/>
            <person name="Hodgson G."/>
            <person name="Holroyd S."/>
            <person name="Hornsby T."/>
            <person name="Howarth S."/>
            <person name="Huckle E.J."/>
            <person name="Hunt S."/>
            <person name="Jagels K."/>
            <person name="James K.D."/>
            <person name="Jones L."/>
            <person name="Jones M."/>
            <person name="Leather S."/>
            <person name="McDonald S."/>
            <person name="McLean J."/>
            <person name="Mooney P."/>
            <person name="Moule S."/>
            <person name="Mungall K.L."/>
            <person name="Murphy L.D."/>
            <person name="Niblett D."/>
            <person name="Odell C."/>
            <person name="Oliver K."/>
            <person name="O'Neil S."/>
            <person name="Pearson D."/>
            <person name="Quail M.A."/>
            <person name="Rabbinowitsch E."/>
            <person name="Rutherford K.M."/>
            <person name="Rutter S."/>
            <person name="Saunders D."/>
            <person name="Seeger K."/>
            <person name="Sharp S."/>
            <person name="Skelton J."/>
            <person name="Simmonds M.N."/>
            <person name="Squares R."/>
            <person name="Squares S."/>
            <person name="Stevens K."/>
            <person name="Taylor K."/>
            <person name="Taylor R.G."/>
            <person name="Tivey A."/>
            <person name="Walsh S.V."/>
            <person name="Warren T."/>
            <person name="Whitehead S."/>
            <person name="Woodward J.R."/>
            <person name="Volckaert G."/>
            <person name="Aert R."/>
            <person name="Robben J."/>
            <person name="Grymonprez B."/>
            <person name="Weltjens I."/>
            <person name="Vanstreels E."/>
            <person name="Rieger M."/>
            <person name="Schaefer M."/>
            <person name="Mueller-Auer S."/>
            <person name="Gabel C."/>
            <person name="Fuchs M."/>
            <person name="Duesterhoeft A."/>
            <person name="Fritzc C."/>
            <person name="Holzer E."/>
            <person name="Moestl D."/>
            <person name="Hilbert H."/>
            <person name="Borzym K."/>
            <person name="Langer I."/>
            <person name="Beck A."/>
            <person name="Lehrach H."/>
            <person name="Reinhardt R."/>
            <person name="Pohl T.M."/>
            <person name="Eger P."/>
            <person name="Zimmermann W."/>
            <person name="Wedler H."/>
            <person name="Wambutt R."/>
            <person name="Purnelle B."/>
            <person name="Goffeau A."/>
            <person name="Cadieu E."/>
            <person name="Dreano S."/>
            <person name="Gloux S."/>
            <person name="Lelaure V."/>
            <person name="Mottier S."/>
            <person name="Galibert F."/>
            <person name="Aves S.J."/>
            <person name="Xiang Z."/>
            <person name="Hunt C."/>
            <person name="Moore K."/>
            <person name="Hurst S.M."/>
            <person name="Lucas M."/>
            <person name="Rochet M."/>
            <person name="Gaillardin C."/>
            <person name="Tallada V.A."/>
            <person name="Garzon A."/>
            <person name="Thode G."/>
            <person name="Daga R.R."/>
            <person name="Cruzado L."/>
            <person name="Jimenez J."/>
            <person name="Sanchez M."/>
            <person name="del Rey F."/>
            <person name="Benito J."/>
            <person name="Dominguez A."/>
            <person name="Revuelta J.L."/>
            <person name="Moreno S."/>
            <person name="Armstrong J."/>
            <person name="Forsburg S.L."/>
            <person name="Cerutti L."/>
            <person name="Lowe T."/>
            <person name="McCombie W.R."/>
            <person name="Paulsen I."/>
            <person name="Potashkin J."/>
            <person name="Shpakovski G.V."/>
            <person name="Ussery D."/>
            <person name="Barrell B.G."/>
            <person name="Nurse P."/>
        </authorList>
    </citation>
    <scope>NUCLEOTIDE SEQUENCE [LARGE SCALE GENOMIC DNA]</scope>
    <source>
        <strain>972 / ATCC 24843</strain>
    </source>
</reference>
<reference key="3">
    <citation type="journal article" date="2003" name="Genes Dev.">
        <title>Cop9/signalosome subunits and Pcu4 regulate ribonucleotide reductase by both checkpoint-dependent and -independent mechanisms.</title>
        <authorList>
            <person name="Liu C."/>
            <person name="Powell K.A."/>
            <person name="Mundt K."/>
            <person name="Wu L."/>
            <person name="Carr A.M."/>
            <person name="Caspari T."/>
        </authorList>
    </citation>
    <scope>FUNCTION</scope>
</reference>
<protein>
    <recommendedName>
        <fullName>COP9 signalosome complex subunit 2</fullName>
        <shortName>CSN complex subunit 2</shortName>
        <shortName>SGN2</shortName>
    </recommendedName>
</protein>
<comment type="function">
    <text evidence="1 4">Component of the COP9 signalosome (CSN) complex that acts as an regulator of the ubiquitin (Ubl) conjugation pathway by mediating the deneddylation of the cullin subunit of SCF-type E3 ubiquitin-protein ligase complexes (By similarity). Required, indirectly, for activation of ribonucleotide reductase through the degradation of the protein spd1, thereby supplying deoxyribonucleotides for DNA replication and repair.</text>
</comment>
<comment type="subunit">
    <text evidence="3">Component of the COP9 signalosome (CSN) complex composed of at least csn1, csn2, csn4 and csn5 subunits.</text>
</comment>
<comment type="subcellular location">
    <subcellularLocation>
        <location evidence="3">Cytoplasm</location>
    </subcellularLocation>
    <subcellularLocation>
        <location evidence="3">Nucleus</location>
    </subcellularLocation>
</comment>
<comment type="similarity">
    <text evidence="5">Belongs to the CSN2 family.</text>
</comment>
<organism>
    <name type="scientific">Schizosaccharomyces pombe (strain 972 / ATCC 24843)</name>
    <name type="common">Fission yeast</name>
    <dbReference type="NCBI Taxonomy" id="284812"/>
    <lineage>
        <taxon>Eukaryota</taxon>
        <taxon>Fungi</taxon>
        <taxon>Dikarya</taxon>
        <taxon>Ascomycota</taxon>
        <taxon>Taphrinomycotina</taxon>
        <taxon>Schizosaccharomycetes</taxon>
        <taxon>Schizosaccharomycetales</taxon>
        <taxon>Schizosaccharomycetaceae</taxon>
        <taxon>Schizosaccharomyces</taxon>
    </lineage>
</organism>
<name>CSN2_SCHPO</name>
<dbReference type="EMBL" id="AF314168">
    <property type="protein sequence ID" value="AAG29547.1"/>
    <property type="molecule type" value="Genomic_DNA"/>
</dbReference>
<dbReference type="EMBL" id="CU329670">
    <property type="protein sequence ID" value="CAD27497.1"/>
    <property type="molecule type" value="Genomic_DNA"/>
</dbReference>
<dbReference type="RefSeq" id="NP_001018220.1">
    <property type="nucleotide sequence ID" value="NM_001018700.2"/>
</dbReference>
<dbReference type="SMR" id="Q9HFR0"/>
<dbReference type="BioGRID" id="280496">
    <property type="interactions" value="54"/>
</dbReference>
<dbReference type="FunCoup" id="Q9HFR0">
    <property type="interactions" value="607"/>
</dbReference>
<dbReference type="IntAct" id="Q9HFR0">
    <property type="interactions" value="1"/>
</dbReference>
<dbReference type="STRING" id="284812.Q9HFR0"/>
<dbReference type="PaxDb" id="4896-SPAPB17E12.04c.1"/>
<dbReference type="EnsemblFungi" id="SPAPB17E12.04c.1">
    <property type="protein sequence ID" value="SPAPB17E12.04c.1:pep"/>
    <property type="gene ID" value="SPAPB17E12.04c"/>
</dbReference>
<dbReference type="GeneID" id="3361420"/>
<dbReference type="KEGG" id="spo:3361420"/>
<dbReference type="PomBase" id="SPAPB17E12.04c">
    <property type="gene designation" value="csn2"/>
</dbReference>
<dbReference type="VEuPathDB" id="FungiDB:SPAPB17E12.04c"/>
<dbReference type="eggNOG" id="KOG1464">
    <property type="taxonomic scope" value="Eukaryota"/>
</dbReference>
<dbReference type="HOGENOM" id="CLU_028981_0_1_1"/>
<dbReference type="InParanoid" id="Q9HFR0"/>
<dbReference type="OMA" id="SEENWKD"/>
<dbReference type="PhylomeDB" id="Q9HFR0"/>
<dbReference type="PRO" id="PR:Q9HFR0"/>
<dbReference type="Proteomes" id="UP000002485">
    <property type="component" value="Chromosome I"/>
</dbReference>
<dbReference type="GO" id="GO:0008180">
    <property type="term" value="C:COP9 signalosome"/>
    <property type="evidence" value="ECO:0000318"/>
    <property type="project" value="GO_Central"/>
</dbReference>
<dbReference type="GO" id="GO:0005829">
    <property type="term" value="C:cytosol"/>
    <property type="evidence" value="ECO:0007005"/>
    <property type="project" value="PomBase"/>
</dbReference>
<dbReference type="GO" id="GO:0005634">
    <property type="term" value="C:nucleus"/>
    <property type="evidence" value="ECO:0007005"/>
    <property type="project" value="PomBase"/>
</dbReference>
<dbReference type="GO" id="GO:0000822">
    <property type="term" value="F:inositol hexakisphosphate binding"/>
    <property type="evidence" value="ECO:0000269"/>
    <property type="project" value="PomBase"/>
</dbReference>
<dbReference type="GO" id="GO:0006974">
    <property type="term" value="P:DNA damage response"/>
    <property type="evidence" value="ECO:0000315"/>
    <property type="project" value="PomBase"/>
</dbReference>
<dbReference type="GO" id="GO:0000338">
    <property type="term" value="P:protein deneddylation"/>
    <property type="evidence" value="ECO:0000315"/>
    <property type="project" value="PomBase"/>
</dbReference>
<dbReference type="FunFam" id="1.25.40.570:FF:000006">
    <property type="entry name" value="COP9 signalosome complex subunit 2"/>
    <property type="match status" value="1"/>
</dbReference>
<dbReference type="Gene3D" id="1.25.40.570">
    <property type="match status" value="1"/>
</dbReference>
<dbReference type="InterPro" id="IPR050871">
    <property type="entry name" value="26S_Proteasome/COP9_Components"/>
</dbReference>
<dbReference type="InterPro" id="IPR000717">
    <property type="entry name" value="PCI_dom"/>
</dbReference>
<dbReference type="InterPro" id="IPR036390">
    <property type="entry name" value="WH_DNA-bd_sf"/>
</dbReference>
<dbReference type="PANTHER" id="PTHR10678">
    <property type="entry name" value="26S PROTEASOME NON-ATPASE REGULATORY SUBUNIT 11/COP9 SIGNALOSOME COMPLEX SUBUNIT 2"/>
    <property type="match status" value="1"/>
</dbReference>
<dbReference type="Pfam" id="PF01399">
    <property type="entry name" value="PCI"/>
    <property type="match status" value="1"/>
</dbReference>
<dbReference type="SMART" id="SM00753">
    <property type="entry name" value="PAM"/>
    <property type="match status" value="1"/>
</dbReference>
<dbReference type="SMART" id="SM00088">
    <property type="entry name" value="PINT"/>
    <property type="match status" value="1"/>
</dbReference>
<dbReference type="SUPFAM" id="SSF46785">
    <property type="entry name" value="Winged helix' DNA-binding domain"/>
    <property type="match status" value="1"/>
</dbReference>
<dbReference type="PROSITE" id="PS50250">
    <property type="entry name" value="PCI"/>
    <property type="match status" value="1"/>
</dbReference>
<proteinExistence type="evidence at protein level"/>
<evidence type="ECO:0000250" key="1"/>
<evidence type="ECO:0000255" key="2">
    <source>
        <dbReference type="PROSITE-ProRule" id="PRU01185"/>
    </source>
</evidence>
<evidence type="ECO:0000269" key="3">
    <source>
    </source>
</evidence>
<evidence type="ECO:0000269" key="4">
    <source>
    </source>
</evidence>
<evidence type="ECO:0000305" key="5"/>
<sequence>MSNDFMLEDDENYDFEFEDDDDDMIEPYVDVENCYYNSKSLKEENPESALTSFYSIVEKCEGEQNEWAFKALKQITKINFQLKKYDDMLQSYQRLLGYTNWLSITKNYSEKSIYNIVEYASSCENTEFLEKFYDVTTKALQNLNNERLMLKVLMHVARFLLTQKNYHKFKYLLRQMHELLSDENNSVADQNRGTHLLELYSLEIQMYSDIEDNKRLKELYQSSLRVKTAIPHPRIMGIIRECGGKMHMQENQWSEAQTNFFESFKSYDEAGSSDRIRVLKYLVLANMLSESEINPFDSPETQPYKDNPHIIAMTKLVEAYQIRDITAVERILQTYQHDILDDDFIRQYVDKILYSIRSQVLIELVKPYTSVKLSLLAKKLGVSISIIEQALVGLIIDERVNGKIDMVNEVFTISQPKNTIHNQLVEDVQKLWNTATK</sequence>
<accession>Q9HFR0</accession>